<dbReference type="EC" id="1.14.99.-" evidence="3"/>
<dbReference type="EMBL" id="LC316945">
    <property type="protein sequence ID" value="BBB04330.1"/>
    <property type="molecule type" value="Genomic_DNA"/>
</dbReference>
<dbReference type="GO" id="GO:0016020">
    <property type="term" value="C:membrane"/>
    <property type="evidence" value="ECO:0007669"/>
    <property type="project" value="UniProtKB-SubCell"/>
</dbReference>
<dbReference type="GO" id="GO:0020037">
    <property type="term" value="F:heme binding"/>
    <property type="evidence" value="ECO:0007669"/>
    <property type="project" value="InterPro"/>
</dbReference>
<dbReference type="GO" id="GO:0005506">
    <property type="term" value="F:iron ion binding"/>
    <property type="evidence" value="ECO:0007669"/>
    <property type="project" value="InterPro"/>
</dbReference>
<dbReference type="GO" id="GO:0004497">
    <property type="term" value="F:monooxygenase activity"/>
    <property type="evidence" value="ECO:0007669"/>
    <property type="project" value="UniProtKB-KW"/>
</dbReference>
<dbReference type="GO" id="GO:0016705">
    <property type="term" value="F:oxidoreductase activity, acting on paired donors, with incorporation or reduction of molecular oxygen"/>
    <property type="evidence" value="ECO:0007669"/>
    <property type="project" value="InterPro"/>
</dbReference>
<dbReference type="GO" id="GO:0043386">
    <property type="term" value="P:mycotoxin biosynthetic process"/>
    <property type="evidence" value="ECO:0007669"/>
    <property type="project" value="UniProtKB-ARBA"/>
</dbReference>
<dbReference type="CDD" id="cd11065">
    <property type="entry name" value="CYP64-like"/>
    <property type="match status" value="1"/>
</dbReference>
<dbReference type="Gene3D" id="1.10.630.10">
    <property type="entry name" value="Cytochrome P450"/>
    <property type="match status" value="1"/>
</dbReference>
<dbReference type="InterPro" id="IPR001128">
    <property type="entry name" value="Cyt_P450"/>
</dbReference>
<dbReference type="InterPro" id="IPR017972">
    <property type="entry name" value="Cyt_P450_CS"/>
</dbReference>
<dbReference type="InterPro" id="IPR002401">
    <property type="entry name" value="Cyt_P450_E_grp-I"/>
</dbReference>
<dbReference type="InterPro" id="IPR036396">
    <property type="entry name" value="Cyt_P450_sf"/>
</dbReference>
<dbReference type="InterPro" id="IPR050364">
    <property type="entry name" value="Cytochrome_P450_fung"/>
</dbReference>
<dbReference type="PANTHER" id="PTHR46300:SF1">
    <property type="entry name" value="P450, PUTATIVE (EUROFUNG)-RELATED"/>
    <property type="match status" value="1"/>
</dbReference>
<dbReference type="PANTHER" id="PTHR46300">
    <property type="entry name" value="P450, PUTATIVE (EUROFUNG)-RELATED-RELATED"/>
    <property type="match status" value="1"/>
</dbReference>
<dbReference type="Pfam" id="PF00067">
    <property type="entry name" value="p450"/>
    <property type="match status" value="1"/>
</dbReference>
<dbReference type="PRINTS" id="PR00463">
    <property type="entry name" value="EP450I"/>
</dbReference>
<dbReference type="PRINTS" id="PR00385">
    <property type="entry name" value="P450"/>
</dbReference>
<dbReference type="SUPFAM" id="SSF48264">
    <property type="entry name" value="Cytochrome P450"/>
    <property type="match status" value="1"/>
</dbReference>
<dbReference type="PROSITE" id="PS00086">
    <property type="entry name" value="CYTOCHROME_P450"/>
    <property type="match status" value="1"/>
</dbReference>
<comment type="function">
    <text evidence="3 4">Cytochrome P450 monooxygenase; part of the gene cluster that mediates the biosynthesis of okaramine B, a prenylated indole alkaloid that possesses an unusual octacyclic ring system, including a four-membered azetidine ring and an eight-membered azocine ring, and that exhibits insecticidal activity against silkworm larvae (PubMed:28631282, PubMed:29384650). Within the pathway, okaD likely catalyzes a key step in forming the eight-membered ring of okaramine A using as substrate okaramine C (PubMed:28631282). The biosynthesis begins with the NRPS okaA that condenses two tryptophan molecules into cyclo(L-Trp-L-Trp). Prenylation by the prenyltransferase okaC then leads to the formation of cyclo(N8-(alpha,alpha-dimethylallyl)-L-Trp-6a-(alpha,alpha-dime-thylallyl)-L-Trp). This is followed by indole 2,3-epoxidation by the FAD-dependent monooxygenase okaB to facilitate the formation of the hexahydropyrrolo[2,3-b]indole (HPI) moiety of okaramine C. The cytochrome P450 monooxygenase okaD then likely catalyzes formation of the eight-membered ring of okaramine A. The dioxygenase okaE further forms the unusual 2-dimethyl-3-methyl-azetidine ring to yield 12-deshydroxyl okaramine E, as well as the hydroxylation of 12-deshydroxyl okaramine E to produce okaramine E. The cytochrome P450 monoxygenase okaG converts 12-deshydroxyl okaramine E into 3-desmethyl okaramine B which is further methylated by the methyltransferase okaF into okaramine B. In a shunt pathway, okaG and okaF together are also able to convert okaramine E into okaramine D (PubMed:28631282, PubMed:29384650). Okaramine H is produced by nonenzymatic conversion from okaramine A (PubMed:29384650).</text>
</comment>
<comment type="catalytic activity">
    <reaction evidence="3">
        <text>okaramine C + 2 reduced [NADPH--hemoprotein reductase] + 2 O2 = okaramine A + 2 oxidized [NADPH--hemoprotein reductase] + 4 H2O + 2 H(+)</text>
        <dbReference type="Rhea" id="RHEA:82703"/>
        <dbReference type="Rhea" id="RHEA-COMP:11964"/>
        <dbReference type="Rhea" id="RHEA-COMP:11965"/>
        <dbReference type="ChEBI" id="CHEBI:15377"/>
        <dbReference type="ChEBI" id="CHEBI:15378"/>
        <dbReference type="ChEBI" id="CHEBI:15379"/>
        <dbReference type="ChEBI" id="CHEBI:57618"/>
        <dbReference type="ChEBI" id="CHEBI:58210"/>
        <dbReference type="ChEBI" id="CHEBI:193028"/>
        <dbReference type="ChEBI" id="CHEBI:232464"/>
    </reaction>
    <physiologicalReaction direction="left-to-right" evidence="3">
        <dbReference type="Rhea" id="RHEA:82704"/>
    </physiologicalReaction>
</comment>
<comment type="cofactor">
    <cofactor evidence="1">
        <name>heme</name>
        <dbReference type="ChEBI" id="CHEBI:30413"/>
    </cofactor>
</comment>
<comment type="pathway">
    <text evidence="3 4">Alkaloid biosynthesis.</text>
</comment>
<comment type="subcellular location">
    <subcellularLocation>
        <location evidence="2">Membrane</location>
        <topology evidence="2">Single-pass membrane protein</topology>
    </subcellularLocation>
</comment>
<comment type="disruption phenotype">
    <text evidence="3 4">Abolishes the production of okaramine B and leads to the accumulation of okaramine C.</text>
</comment>
<comment type="similarity">
    <text evidence="6">Belongs to the cytochrome P450 family.</text>
</comment>
<evidence type="ECO:0000250" key="1">
    <source>
        <dbReference type="UniProtKB" id="P04798"/>
    </source>
</evidence>
<evidence type="ECO:0000255" key="2"/>
<evidence type="ECO:0000269" key="3">
    <source>
    </source>
</evidence>
<evidence type="ECO:0000269" key="4">
    <source>
    </source>
</evidence>
<evidence type="ECO:0000303" key="5">
    <source>
    </source>
</evidence>
<evidence type="ECO:0000305" key="6"/>
<sequence>MASEIYRRLPMELPAQHLLASLALVGALLSVGYLLLRPAKYQLPLPPGPRGLPIIGNLHQAPKEKAWEVYKQWSDRYGPIMSVNNGGMITIIVSSHEVVKNFLEKNNAVFSSRPQLLVLERALYGFTTPALPYGEKWLKHRALRGAVLKPAMAVRYRGLQDLESKQLLRDLLYSEDFTQCMRRQAASLFLGIAYGNRFPEETPEIIDIDQAVAQLGGISESMFQGTGMLREFFPVLKYFPGYDKFLKQLDDVGERLANIYVRRFRDGLSTPAWNWAKEYSKRPEAQGMGELELSFCIGSTYQASLTPYEILRIILLAAICHPEEKARLQKEIDLVVGKDNLPGWEHKDRIQFVQAFIYEALRWHAFSPLGAPRAVSRDIEYKGYFIPKGATLVLNQWAMDHDENVYDNPFTFRPQRWIDNPDLPHVIFGFGLRGCPGQHLARDHLFINTARLFWAFNFGNAYENGKKVELDLDELMQPRGGGSAFNQVPSFKASVIIRSSERRQIVENEWDAVEKDEQKILAEAMPLPE</sequence>
<gene>
    <name evidence="5" type="primary">okaD</name>
</gene>
<organism>
    <name type="scientific">Penicillium ochrochloron</name>
    <dbReference type="NCBI Taxonomy" id="69780"/>
    <lineage>
        <taxon>Eukaryota</taxon>
        <taxon>Fungi</taxon>
        <taxon>Dikarya</taxon>
        <taxon>Ascomycota</taxon>
        <taxon>Pezizomycotina</taxon>
        <taxon>Eurotiomycetes</taxon>
        <taxon>Eurotiomycetidae</taxon>
        <taxon>Eurotiales</taxon>
        <taxon>Aspergillaceae</taxon>
        <taxon>Penicillium</taxon>
    </lineage>
</organism>
<proteinExistence type="evidence at protein level"/>
<keyword id="KW-0349">Heme</keyword>
<keyword id="KW-0408">Iron</keyword>
<keyword id="KW-0472">Membrane</keyword>
<keyword id="KW-0479">Metal-binding</keyword>
<keyword id="KW-0503">Monooxygenase</keyword>
<keyword id="KW-0560">Oxidoreductase</keyword>
<keyword id="KW-0812">Transmembrane</keyword>
<keyword id="KW-1133">Transmembrane helix</keyword>
<protein>
    <recommendedName>
        <fullName evidence="5">Cytochrome P450 monooxygenase okaD</fullName>
        <ecNumber evidence="3">1.14.99.-</ecNumber>
    </recommendedName>
    <alternativeName>
        <fullName evidence="5">Okaramines biosynthesis cluster protein D</fullName>
    </alternativeName>
</protein>
<name>OKAD_PENOH</name>
<feature type="chain" id="PRO_0000461558" description="Cytochrome P450 monooxygenase okaD">
    <location>
        <begin position="1"/>
        <end position="529"/>
    </location>
</feature>
<feature type="transmembrane region" description="Helical" evidence="2">
    <location>
        <begin position="13"/>
        <end position="35"/>
    </location>
</feature>
<feature type="binding site" description="axial binding residue" evidence="1">
    <location>
        <position position="435"/>
    </location>
    <ligand>
        <name>heme</name>
        <dbReference type="ChEBI" id="CHEBI:30413"/>
    </ligand>
    <ligandPart>
        <name>Fe</name>
        <dbReference type="ChEBI" id="CHEBI:18248"/>
    </ligandPart>
</feature>
<reference key="1">
    <citation type="journal article" date="2018" name="ACS Chem. Biol.">
        <title>Biosynthesis and Structure-Activity Relationship Studies of Okaramines That Target Insect Glutamate-Gated Chloride Channels.</title>
        <authorList>
            <person name="Kato N."/>
            <person name="Furutani S."/>
            <person name="Otaka J."/>
            <person name="Noguchi A."/>
            <person name="Kinugasa K."/>
            <person name="Kai K."/>
            <person name="Hayashi H."/>
            <person name="Ihara M."/>
            <person name="Takahashi S."/>
            <person name="Matsuda K."/>
            <person name="Osada H."/>
        </authorList>
    </citation>
    <scope>NUCLEOTIDE SEQUENCE [GENOMIC DNA]</scope>
    <scope>FUNCTION</scope>
    <scope>DISRUPTION PHENOTYPE</scope>
    <scope>PATHWAY</scope>
    <source>
        <strain>ATCC 90288 / AK-40</strain>
    </source>
</reference>
<reference key="2">
    <citation type="journal article" date="2017" name="Angew. Chem. Int. Ed.">
        <title>Biosynthesis of Complex Indole Alkaloids: Elucidation of the Concise Pathway of Okaramines.</title>
        <authorList>
            <person name="Lai C.Y."/>
            <person name="Lo I.W."/>
            <person name="Hewage R.T."/>
            <person name="Chen Y.C."/>
            <person name="Chen C.T."/>
            <person name="Lee C.F."/>
            <person name="Lin S."/>
            <person name="Tang M.C."/>
            <person name="Lin H.C."/>
        </authorList>
    </citation>
    <scope>FUNCTION</scope>
    <scope>DISRUPTION PHENOTYPE</scope>
    <scope>CATALYTIC ACTIVITY</scope>
    <scope>PATHWAY</scope>
</reference>
<accession>A0A2Z5U6I9</accession>